<name>RRF2M_DROME</name>
<feature type="transit peptide" description="Mitochondrion" evidence="1">
    <location>
        <begin position="1"/>
        <end position="29"/>
    </location>
</feature>
<feature type="chain" id="PRO_0000385601" description="Ribosome-releasing factor 2, mitochondrial">
    <location>
        <begin position="30"/>
        <end position="740"/>
    </location>
</feature>
<feature type="domain" description="tr-type G">
    <location>
        <begin position="31"/>
        <end position="310"/>
    </location>
</feature>
<feature type="binding site" evidence="1">
    <location>
        <begin position="40"/>
        <end position="47"/>
    </location>
    <ligand>
        <name>GTP</name>
        <dbReference type="ChEBI" id="CHEBI:37565"/>
    </ligand>
</feature>
<feature type="binding site" evidence="1">
    <location>
        <begin position="104"/>
        <end position="108"/>
    </location>
    <ligand>
        <name>GTP</name>
        <dbReference type="ChEBI" id="CHEBI:37565"/>
    </ligand>
</feature>
<feature type="binding site" evidence="1">
    <location>
        <begin position="158"/>
        <end position="161"/>
    </location>
    <ligand>
        <name>GTP</name>
        <dbReference type="ChEBI" id="CHEBI:37565"/>
    </ligand>
</feature>
<feature type="sequence conflict" description="In Ref. 1; BAI79334." evidence="3" ref="1">
    <original>A</original>
    <variation>T</variation>
    <location>
        <position position="425"/>
    </location>
</feature>
<feature type="sequence conflict" description="In Ref. 1; BAI79334." evidence="3" ref="1">
    <original>A</original>
    <variation>D</variation>
    <location>
        <position position="441"/>
    </location>
</feature>
<gene>
    <name evidence="4" type="primary">mRRF2</name>
    <name evidence="2" type="synonym">EF-G2</name>
    <name evidence="4" type="ORF">CG31159</name>
</gene>
<sequence length="740" mass="81961">MLKYAWQSGPKQSNRWLWHLSNQIWKRSYSSKIRNIGILAHIDAGKTTTTERMLFYAGKTRALGEVHRGNTVTDYLTQERERGITICSSAVTFSWNDHRINLLDTPGHIDFTMEVEQSLYAVDGVVVVLDGTAGVEAQTVTVWSQADKHKLPRLIFVNKMDRPDADFEKCVSDLKDKLETQPVCLQYPVKNEDGVLAINDVITLERLSWQQKDLGRSYRNVKLEPSDDLRLLQEKRNELIDQLSGLDDELADVVISTESFDNVDNALIERALRRATTQQKVVPVLLGSAYKNVGIQRLMDAVNAYLPAPEERNQIYDCFGTEVAGKVFKIVHDKQRGPLTLVRILRGEIKRGMRLISARGQAEVVSKLYEPLADEYREVSAVQSGDVVICAGLKSTVTGDLLTSSQSALKNAQKRYKQSLGNTAAKVEEDDELDESDELFAIDPQIPDAVYFCSIEPPSVSSQTAMEQALKQLQREDPSLRVSYDSVTGQTVLGGMGELHMDIIKSRILSEYKIDVDLGPLQIAYKETIEAPALTTLSVEKEIAGSKQSVSITLEVVKNQAELFSLDKSPDNLPNLNTLRPRILQVLRKGSISALERGPRVGGQVVETQIRLHNATIGRGTADSFVMATAAQCVQKLLSTSGTRLLEPIMALQIVAPSERISGIMADLSRRRALINDVLPKGERNKMILVNAPLAELSGYSSALRTISSGTASMTMQPCGFSSMNSVDESLAERRAQGLE</sequence>
<dbReference type="EMBL" id="AB514521">
    <property type="protein sequence ID" value="BAI79334.1"/>
    <property type="status" value="ALT_INIT"/>
    <property type="molecule type" value="mRNA"/>
</dbReference>
<dbReference type="EMBL" id="JF309280">
    <property type="protein sequence ID" value="ADZ24788.1"/>
    <property type="molecule type" value="mRNA"/>
</dbReference>
<dbReference type="EMBL" id="AE014297">
    <property type="protein sequence ID" value="AAF56031.3"/>
    <property type="molecule type" value="Genomic_DNA"/>
</dbReference>
<dbReference type="RefSeq" id="NP_732771.2">
    <property type="nucleotide sequence ID" value="NM_170028.3"/>
</dbReference>
<dbReference type="SMR" id="Q9VCX4"/>
<dbReference type="FunCoup" id="Q9VCX4">
    <property type="interactions" value="503"/>
</dbReference>
<dbReference type="IntAct" id="Q9VCX4">
    <property type="interactions" value="4"/>
</dbReference>
<dbReference type="STRING" id="7227.FBpp0083663"/>
<dbReference type="PaxDb" id="7227-FBpp0083663"/>
<dbReference type="EnsemblMetazoa" id="FBtr0084270">
    <property type="protein sequence ID" value="FBpp0083663"/>
    <property type="gene ID" value="FBgn0051159"/>
</dbReference>
<dbReference type="GeneID" id="42670"/>
<dbReference type="KEGG" id="dme:Dmel_CG31159"/>
<dbReference type="UCSC" id="CG31159-RA">
    <property type="organism name" value="d. melanogaster"/>
</dbReference>
<dbReference type="AGR" id="FB:FBgn0051159"/>
<dbReference type="CTD" id="42670"/>
<dbReference type="FlyBase" id="FBgn0051159">
    <property type="gene designation" value="mRRF2"/>
</dbReference>
<dbReference type="VEuPathDB" id="VectorBase:FBgn0051159"/>
<dbReference type="eggNOG" id="KOG0464">
    <property type="taxonomic scope" value="Eukaryota"/>
</dbReference>
<dbReference type="GeneTree" id="ENSGT00550000074890"/>
<dbReference type="HOGENOM" id="CLU_002794_4_1_1"/>
<dbReference type="InParanoid" id="Q9VCX4"/>
<dbReference type="OMA" id="GPQFTFP"/>
<dbReference type="OrthoDB" id="198619at2759"/>
<dbReference type="PhylomeDB" id="Q9VCX4"/>
<dbReference type="Reactome" id="R-DME-5419276">
    <property type="pathway name" value="Mitochondrial translation termination"/>
</dbReference>
<dbReference type="BioGRID-ORCS" id="42670">
    <property type="hits" value="0 hits in 1 CRISPR screen"/>
</dbReference>
<dbReference type="GenomeRNAi" id="42670"/>
<dbReference type="PRO" id="PR:Q9VCX4"/>
<dbReference type="Proteomes" id="UP000000803">
    <property type="component" value="Chromosome 3R"/>
</dbReference>
<dbReference type="Bgee" id="FBgn0051159">
    <property type="expression patterns" value="Expressed in early-mid elongation-stage spermatid (Drosophila) in testis and 30 other cell types or tissues"/>
</dbReference>
<dbReference type="ExpressionAtlas" id="Q9VCX4">
    <property type="expression patterns" value="baseline and differential"/>
</dbReference>
<dbReference type="GO" id="GO:0005739">
    <property type="term" value="C:mitochondrion"/>
    <property type="evidence" value="ECO:0000250"/>
    <property type="project" value="FlyBase"/>
</dbReference>
<dbReference type="GO" id="GO:0005525">
    <property type="term" value="F:GTP binding"/>
    <property type="evidence" value="ECO:0007669"/>
    <property type="project" value="UniProtKB-UniRule"/>
</dbReference>
<dbReference type="GO" id="GO:0003924">
    <property type="term" value="F:GTPase activity"/>
    <property type="evidence" value="ECO:0000250"/>
    <property type="project" value="UniProtKB"/>
</dbReference>
<dbReference type="GO" id="GO:0032543">
    <property type="term" value="P:mitochondrial translation"/>
    <property type="evidence" value="ECO:0000250"/>
    <property type="project" value="UniProtKB"/>
</dbReference>
<dbReference type="GO" id="GO:0032790">
    <property type="term" value="P:ribosome disassembly"/>
    <property type="evidence" value="ECO:0000250"/>
    <property type="project" value="UniProtKB"/>
</dbReference>
<dbReference type="CDD" id="cd16262">
    <property type="entry name" value="EFG_III"/>
    <property type="match status" value="1"/>
</dbReference>
<dbReference type="CDD" id="cd03713">
    <property type="entry name" value="EFG_mtEFG_C"/>
    <property type="match status" value="1"/>
</dbReference>
<dbReference type="CDD" id="cd01693">
    <property type="entry name" value="mtEFG2_like_IV"/>
    <property type="match status" value="1"/>
</dbReference>
<dbReference type="FunFam" id="3.30.70.240:FF:000001">
    <property type="entry name" value="Elongation factor G"/>
    <property type="match status" value="1"/>
</dbReference>
<dbReference type="FunFam" id="2.40.30.10:FF:000203">
    <property type="entry name" value="Ribosome-releasing factor 2, mitochondrial"/>
    <property type="match status" value="1"/>
</dbReference>
<dbReference type="FunFam" id="3.30.230.10:FF:000033">
    <property type="entry name" value="Ribosome-releasing factor 2, mitochondrial"/>
    <property type="match status" value="1"/>
</dbReference>
<dbReference type="FunFam" id="3.30.70.870:FF:000005">
    <property type="entry name" value="Ribosome-releasing factor 2, mitochondrial"/>
    <property type="match status" value="1"/>
</dbReference>
<dbReference type="FunFam" id="3.40.50.300:FF:000514">
    <property type="entry name" value="Ribosome-releasing factor 2, mitochondrial"/>
    <property type="match status" value="1"/>
</dbReference>
<dbReference type="Gene3D" id="3.30.230.10">
    <property type="match status" value="1"/>
</dbReference>
<dbReference type="Gene3D" id="3.30.70.240">
    <property type="match status" value="1"/>
</dbReference>
<dbReference type="Gene3D" id="3.30.70.870">
    <property type="entry name" value="Elongation Factor G (Translational Gtpase), domain 3"/>
    <property type="match status" value="1"/>
</dbReference>
<dbReference type="Gene3D" id="3.40.50.300">
    <property type="entry name" value="P-loop containing nucleotide triphosphate hydrolases"/>
    <property type="match status" value="1"/>
</dbReference>
<dbReference type="Gene3D" id="2.40.30.10">
    <property type="entry name" value="Translation factors"/>
    <property type="match status" value="1"/>
</dbReference>
<dbReference type="HAMAP" id="MF_03059">
    <property type="entry name" value="mEF_G_2"/>
    <property type="match status" value="1"/>
</dbReference>
<dbReference type="InterPro" id="IPR053905">
    <property type="entry name" value="EF-G-like_DII"/>
</dbReference>
<dbReference type="InterPro" id="IPR030851">
    <property type="entry name" value="EFG2"/>
</dbReference>
<dbReference type="InterPro" id="IPR041095">
    <property type="entry name" value="EFG_II"/>
</dbReference>
<dbReference type="InterPro" id="IPR009022">
    <property type="entry name" value="EFG_III"/>
</dbReference>
<dbReference type="InterPro" id="IPR035647">
    <property type="entry name" value="EFG_III/V"/>
</dbReference>
<dbReference type="InterPro" id="IPR035649">
    <property type="entry name" value="EFG_V"/>
</dbReference>
<dbReference type="InterPro" id="IPR000640">
    <property type="entry name" value="EFG_V-like"/>
</dbReference>
<dbReference type="InterPro" id="IPR031157">
    <property type="entry name" value="G_TR_CS"/>
</dbReference>
<dbReference type="InterPro" id="IPR027417">
    <property type="entry name" value="P-loop_NTPase"/>
</dbReference>
<dbReference type="InterPro" id="IPR020568">
    <property type="entry name" value="Ribosomal_Su5_D2-typ_SF"/>
</dbReference>
<dbReference type="InterPro" id="IPR014721">
    <property type="entry name" value="Ribsml_uS5_D2-typ_fold_subgr"/>
</dbReference>
<dbReference type="InterPro" id="IPR005225">
    <property type="entry name" value="Small_GTP-bd"/>
</dbReference>
<dbReference type="InterPro" id="IPR000795">
    <property type="entry name" value="T_Tr_GTP-bd_dom"/>
</dbReference>
<dbReference type="InterPro" id="IPR009000">
    <property type="entry name" value="Transl_B-barrel_sf"/>
</dbReference>
<dbReference type="NCBIfam" id="TIGR00231">
    <property type="entry name" value="small_GTP"/>
    <property type="match status" value="1"/>
</dbReference>
<dbReference type="PANTHER" id="PTHR43261:SF1">
    <property type="entry name" value="RIBOSOME-RELEASING FACTOR 2, MITOCHONDRIAL"/>
    <property type="match status" value="1"/>
</dbReference>
<dbReference type="PANTHER" id="PTHR43261">
    <property type="entry name" value="TRANSLATION ELONGATION FACTOR G-RELATED"/>
    <property type="match status" value="1"/>
</dbReference>
<dbReference type="Pfam" id="PF22042">
    <property type="entry name" value="EF-G_D2"/>
    <property type="match status" value="1"/>
</dbReference>
<dbReference type="Pfam" id="PF00679">
    <property type="entry name" value="EFG_C"/>
    <property type="match status" value="1"/>
</dbReference>
<dbReference type="Pfam" id="PF14492">
    <property type="entry name" value="EFG_III"/>
    <property type="match status" value="1"/>
</dbReference>
<dbReference type="Pfam" id="PF00009">
    <property type="entry name" value="GTP_EFTU"/>
    <property type="match status" value="1"/>
</dbReference>
<dbReference type="PRINTS" id="PR00315">
    <property type="entry name" value="ELONGATNFCT"/>
</dbReference>
<dbReference type="SMART" id="SM00838">
    <property type="entry name" value="EFG_C"/>
    <property type="match status" value="1"/>
</dbReference>
<dbReference type="SUPFAM" id="SSF54980">
    <property type="entry name" value="EF-G C-terminal domain-like"/>
    <property type="match status" value="2"/>
</dbReference>
<dbReference type="SUPFAM" id="SSF52540">
    <property type="entry name" value="P-loop containing nucleoside triphosphate hydrolases"/>
    <property type="match status" value="1"/>
</dbReference>
<dbReference type="SUPFAM" id="SSF54211">
    <property type="entry name" value="Ribosomal protein S5 domain 2-like"/>
    <property type="match status" value="1"/>
</dbReference>
<dbReference type="SUPFAM" id="SSF50447">
    <property type="entry name" value="Translation proteins"/>
    <property type="match status" value="1"/>
</dbReference>
<dbReference type="PROSITE" id="PS00301">
    <property type="entry name" value="G_TR_1"/>
    <property type="match status" value="1"/>
</dbReference>
<dbReference type="PROSITE" id="PS51722">
    <property type="entry name" value="G_TR_2"/>
    <property type="match status" value="1"/>
</dbReference>
<comment type="function">
    <text evidence="1">Mitochondrial GTPase that mediates the disassembly of ribosomes from messenger RNA at the termination of mitochondrial protein biosynthesis. Not involved in the GTP-dependent ribosomal translocation step during translation elongation.</text>
</comment>
<comment type="subcellular location">
    <subcellularLocation>
        <location evidence="1">Mitochondrion</location>
    </subcellularLocation>
</comment>
<comment type="similarity">
    <text evidence="1">Belongs to the TRAFAC class translation factor GTPase superfamily. Classic translation factor GTPase family. EF-G/EF-2 subfamily.</text>
</comment>
<comment type="sequence caution" evidence="3">
    <conflict type="erroneous initiation">
        <sequence resource="EMBL-CDS" id="BAI79334"/>
    </conflict>
    <text>Extended N-terminus.</text>
</comment>
<organism>
    <name type="scientific">Drosophila melanogaster</name>
    <name type="common">Fruit fly</name>
    <dbReference type="NCBI Taxonomy" id="7227"/>
    <lineage>
        <taxon>Eukaryota</taxon>
        <taxon>Metazoa</taxon>
        <taxon>Ecdysozoa</taxon>
        <taxon>Arthropoda</taxon>
        <taxon>Hexapoda</taxon>
        <taxon>Insecta</taxon>
        <taxon>Pterygota</taxon>
        <taxon>Neoptera</taxon>
        <taxon>Endopterygota</taxon>
        <taxon>Diptera</taxon>
        <taxon>Brachycera</taxon>
        <taxon>Muscomorpha</taxon>
        <taxon>Ephydroidea</taxon>
        <taxon>Drosophilidae</taxon>
        <taxon>Drosophila</taxon>
        <taxon>Sophophora</taxon>
    </lineage>
</organism>
<proteinExistence type="evidence at transcript level"/>
<reference key="1">
    <citation type="journal article" date="2010" name="Mol. Microbiol.">
        <title>A bacterial elongation factor G homologue exclusively functions in ribosome recycling in the spirochaete Borrelia burgdorferi.</title>
        <authorList>
            <person name="Suematsu T."/>
            <person name="Yokobori S."/>
            <person name="Morita H."/>
            <person name="Yoshinari S."/>
            <person name="Ueda T."/>
            <person name="Kita K."/>
            <person name="Takeuchi N."/>
            <person name="Watanabe Y."/>
        </authorList>
    </citation>
    <scope>NUCLEOTIDE SEQUENCE [MRNA]</scope>
</reference>
<reference key="2">
    <citation type="journal article" date="2011" name="PLoS ONE">
        <title>The Drosophila mitochondrial translation elongation factor G1 contains a nuclear localization signal and inhibits growth and DPP signaling.</title>
        <authorList>
            <person name="Trivigno C."/>
            <person name="Haerry T.E."/>
        </authorList>
    </citation>
    <scope>NUCLEOTIDE SEQUENCE [MRNA]</scope>
    <source>
        <tissue>Embryo</tissue>
    </source>
</reference>
<reference key="3">
    <citation type="journal article" date="2000" name="Science">
        <title>The genome sequence of Drosophila melanogaster.</title>
        <authorList>
            <person name="Adams M.D."/>
            <person name="Celniker S.E."/>
            <person name="Holt R.A."/>
            <person name="Evans C.A."/>
            <person name="Gocayne J.D."/>
            <person name="Amanatides P.G."/>
            <person name="Scherer S.E."/>
            <person name="Li P.W."/>
            <person name="Hoskins R.A."/>
            <person name="Galle R.F."/>
            <person name="George R.A."/>
            <person name="Lewis S.E."/>
            <person name="Richards S."/>
            <person name="Ashburner M."/>
            <person name="Henderson S.N."/>
            <person name="Sutton G.G."/>
            <person name="Wortman J.R."/>
            <person name="Yandell M.D."/>
            <person name="Zhang Q."/>
            <person name="Chen L.X."/>
            <person name="Brandon R.C."/>
            <person name="Rogers Y.-H.C."/>
            <person name="Blazej R.G."/>
            <person name="Champe M."/>
            <person name="Pfeiffer B.D."/>
            <person name="Wan K.H."/>
            <person name="Doyle C."/>
            <person name="Baxter E.G."/>
            <person name="Helt G."/>
            <person name="Nelson C.R."/>
            <person name="Miklos G.L.G."/>
            <person name="Abril J.F."/>
            <person name="Agbayani A."/>
            <person name="An H.-J."/>
            <person name="Andrews-Pfannkoch C."/>
            <person name="Baldwin D."/>
            <person name="Ballew R.M."/>
            <person name="Basu A."/>
            <person name="Baxendale J."/>
            <person name="Bayraktaroglu L."/>
            <person name="Beasley E.M."/>
            <person name="Beeson K.Y."/>
            <person name="Benos P.V."/>
            <person name="Berman B.P."/>
            <person name="Bhandari D."/>
            <person name="Bolshakov S."/>
            <person name="Borkova D."/>
            <person name="Botchan M.R."/>
            <person name="Bouck J."/>
            <person name="Brokstein P."/>
            <person name="Brottier P."/>
            <person name="Burtis K.C."/>
            <person name="Busam D.A."/>
            <person name="Butler H."/>
            <person name="Cadieu E."/>
            <person name="Center A."/>
            <person name="Chandra I."/>
            <person name="Cherry J.M."/>
            <person name="Cawley S."/>
            <person name="Dahlke C."/>
            <person name="Davenport L.B."/>
            <person name="Davies P."/>
            <person name="de Pablos B."/>
            <person name="Delcher A."/>
            <person name="Deng Z."/>
            <person name="Mays A.D."/>
            <person name="Dew I."/>
            <person name="Dietz S.M."/>
            <person name="Dodson K."/>
            <person name="Doup L.E."/>
            <person name="Downes M."/>
            <person name="Dugan-Rocha S."/>
            <person name="Dunkov B.C."/>
            <person name="Dunn P."/>
            <person name="Durbin K.J."/>
            <person name="Evangelista C.C."/>
            <person name="Ferraz C."/>
            <person name="Ferriera S."/>
            <person name="Fleischmann W."/>
            <person name="Fosler C."/>
            <person name="Gabrielian A.E."/>
            <person name="Garg N.S."/>
            <person name="Gelbart W.M."/>
            <person name="Glasser K."/>
            <person name="Glodek A."/>
            <person name="Gong F."/>
            <person name="Gorrell J.H."/>
            <person name="Gu Z."/>
            <person name="Guan P."/>
            <person name="Harris M."/>
            <person name="Harris N.L."/>
            <person name="Harvey D.A."/>
            <person name="Heiman T.J."/>
            <person name="Hernandez J.R."/>
            <person name="Houck J."/>
            <person name="Hostin D."/>
            <person name="Houston K.A."/>
            <person name="Howland T.J."/>
            <person name="Wei M.-H."/>
            <person name="Ibegwam C."/>
            <person name="Jalali M."/>
            <person name="Kalush F."/>
            <person name="Karpen G.H."/>
            <person name="Ke Z."/>
            <person name="Kennison J.A."/>
            <person name="Ketchum K.A."/>
            <person name="Kimmel B.E."/>
            <person name="Kodira C.D."/>
            <person name="Kraft C.L."/>
            <person name="Kravitz S."/>
            <person name="Kulp D."/>
            <person name="Lai Z."/>
            <person name="Lasko P."/>
            <person name="Lei Y."/>
            <person name="Levitsky A.A."/>
            <person name="Li J.H."/>
            <person name="Li Z."/>
            <person name="Liang Y."/>
            <person name="Lin X."/>
            <person name="Liu X."/>
            <person name="Mattei B."/>
            <person name="McIntosh T.C."/>
            <person name="McLeod M.P."/>
            <person name="McPherson D."/>
            <person name="Merkulov G."/>
            <person name="Milshina N.V."/>
            <person name="Mobarry C."/>
            <person name="Morris J."/>
            <person name="Moshrefi A."/>
            <person name="Mount S.M."/>
            <person name="Moy M."/>
            <person name="Murphy B."/>
            <person name="Murphy L."/>
            <person name="Muzny D.M."/>
            <person name="Nelson D.L."/>
            <person name="Nelson D.R."/>
            <person name="Nelson K.A."/>
            <person name="Nixon K."/>
            <person name="Nusskern D.R."/>
            <person name="Pacleb J.M."/>
            <person name="Palazzolo M."/>
            <person name="Pittman G.S."/>
            <person name="Pan S."/>
            <person name="Pollard J."/>
            <person name="Puri V."/>
            <person name="Reese M.G."/>
            <person name="Reinert K."/>
            <person name="Remington K."/>
            <person name="Saunders R.D.C."/>
            <person name="Scheeler F."/>
            <person name="Shen H."/>
            <person name="Shue B.C."/>
            <person name="Siden-Kiamos I."/>
            <person name="Simpson M."/>
            <person name="Skupski M.P."/>
            <person name="Smith T.J."/>
            <person name="Spier E."/>
            <person name="Spradling A.C."/>
            <person name="Stapleton M."/>
            <person name="Strong R."/>
            <person name="Sun E."/>
            <person name="Svirskas R."/>
            <person name="Tector C."/>
            <person name="Turner R."/>
            <person name="Venter E."/>
            <person name="Wang A.H."/>
            <person name="Wang X."/>
            <person name="Wang Z.-Y."/>
            <person name="Wassarman D.A."/>
            <person name="Weinstock G.M."/>
            <person name="Weissenbach J."/>
            <person name="Williams S.M."/>
            <person name="Woodage T."/>
            <person name="Worley K.C."/>
            <person name="Wu D."/>
            <person name="Yang S."/>
            <person name="Yao Q.A."/>
            <person name="Ye J."/>
            <person name="Yeh R.-F."/>
            <person name="Zaveri J.S."/>
            <person name="Zhan M."/>
            <person name="Zhang G."/>
            <person name="Zhao Q."/>
            <person name="Zheng L."/>
            <person name="Zheng X.H."/>
            <person name="Zhong F.N."/>
            <person name="Zhong W."/>
            <person name="Zhou X."/>
            <person name="Zhu S.C."/>
            <person name="Zhu X."/>
            <person name="Smith H.O."/>
            <person name="Gibbs R.A."/>
            <person name="Myers E.W."/>
            <person name="Rubin G.M."/>
            <person name="Venter J.C."/>
        </authorList>
    </citation>
    <scope>NUCLEOTIDE SEQUENCE [LARGE SCALE GENOMIC DNA]</scope>
    <source>
        <strain>Berkeley</strain>
    </source>
</reference>
<reference key="4">
    <citation type="journal article" date="2002" name="Genome Biol.">
        <title>Annotation of the Drosophila melanogaster euchromatic genome: a systematic review.</title>
        <authorList>
            <person name="Misra S."/>
            <person name="Crosby M.A."/>
            <person name="Mungall C.J."/>
            <person name="Matthews B.B."/>
            <person name="Campbell K.S."/>
            <person name="Hradecky P."/>
            <person name="Huang Y."/>
            <person name="Kaminker J.S."/>
            <person name="Millburn G.H."/>
            <person name="Prochnik S.E."/>
            <person name="Smith C.D."/>
            <person name="Tupy J.L."/>
            <person name="Whitfield E.J."/>
            <person name="Bayraktaroglu L."/>
            <person name="Berman B.P."/>
            <person name="Bettencourt B.R."/>
            <person name="Celniker S.E."/>
            <person name="de Grey A.D.N.J."/>
            <person name="Drysdale R.A."/>
            <person name="Harris N.L."/>
            <person name="Richter J."/>
            <person name="Russo S."/>
            <person name="Schroeder A.J."/>
            <person name="Shu S.Q."/>
            <person name="Stapleton M."/>
            <person name="Yamada C."/>
            <person name="Ashburner M."/>
            <person name="Gelbart W.M."/>
            <person name="Rubin G.M."/>
            <person name="Lewis S.E."/>
        </authorList>
    </citation>
    <scope>GENOME REANNOTATION</scope>
    <source>
        <strain>Berkeley</strain>
    </source>
</reference>
<protein>
    <recommendedName>
        <fullName evidence="1">Ribosome-releasing factor 2, mitochondrial</fullName>
        <shortName evidence="1">RRF2mt</shortName>
    </recommendedName>
    <alternativeName>
        <fullName evidence="1">Elongation factor G 2, mitochondrial</fullName>
        <shortName evidence="1">EF-G2mt</shortName>
        <shortName evidence="1">mEF-G 2</shortName>
    </alternativeName>
    <alternativeName>
        <fullName evidence="2">Elongation factor G2</fullName>
    </alternativeName>
    <alternativeName>
        <fullName evidence="4">Ribosome-recycling factor 2, mitochondrial</fullName>
    </alternativeName>
</protein>
<evidence type="ECO:0000255" key="1">
    <source>
        <dbReference type="HAMAP-Rule" id="MF_03059"/>
    </source>
</evidence>
<evidence type="ECO:0000303" key="2">
    <source>
    </source>
</evidence>
<evidence type="ECO:0000305" key="3"/>
<evidence type="ECO:0000312" key="4">
    <source>
        <dbReference type="FlyBase" id="FBgn0051159"/>
    </source>
</evidence>
<accession>Q9VCX4</accession>
<accession>D3KU70</accession>
<accession>F1JZV4</accession>
<keyword id="KW-0342">GTP-binding</keyword>
<keyword id="KW-0496">Mitochondrion</keyword>
<keyword id="KW-0547">Nucleotide-binding</keyword>
<keyword id="KW-0648">Protein biosynthesis</keyword>
<keyword id="KW-1185">Reference proteome</keyword>
<keyword id="KW-0809">Transit peptide</keyword>